<comment type="function">
    <text evidence="1">Part of the ABC transporter complex ModABC involved in molybdenum import. Responsible for energy coupling to the transport system.</text>
</comment>
<comment type="catalytic activity">
    <reaction evidence="1">
        <text>molybdate(out) + ATP + H2O = molybdate(in) + ADP + phosphate + H(+)</text>
        <dbReference type="Rhea" id="RHEA:22020"/>
        <dbReference type="ChEBI" id="CHEBI:15377"/>
        <dbReference type="ChEBI" id="CHEBI:15378"/>
        <dbReference type="ChEBI" id="CHEBI:30616"/>
        <dbReference type="ChEBI" id="CHEBI:36264"/>
        <dbReference type="ChEBI" id="CHEBI:43474"/>
        <dbReference type="ChEBI" id="CHEBI:456216"/>
        <dbReference type="EC" id="7.3.2.5"/>
    </reaction>
</comment>
<comment type="subunit">
    <text evidence="1">The complex is composed of two ATP-binding proteins (ModC), two transmembrane proteins (ModB) and a solute-binding protein (ModA).</text>
</comment>
<comment type="subcellular location">
    <subcellularLocation>
        <location evidence="1">Cell inner membrane</location>
        <topology evidence="1">Peripheral membrane protein</topology>
    </subcellularLocation>
</comment>
<comment type="similarity">
    <text evidence="1">Belongs to the ABC transporter superfamily. Molybdate importer (TC 3.A.1.8) family.</text>
</comment>
<name>MODC_SHEON</name>
<feature type="chain" id="PRO_0000092557" description="Molybdenum import ATP-binding protein ModC">
    <location>
        <begin position="1"/>
        <end position="361"/>
    </location>
</feature>
<feature type="domain" description="ABC transporter" evidence="1">
    <location>
        <begin position="1"/>
        <end position="228"/>
    </location>
</feature>
<feature type="domain" description="Mop" evidence="2">
    <location>
        <begin position="289"/>
        <end position="356"/>
    </location>
</feature>
<feature type="binding site" evidence="1">
    <location>
        <begin position="31"/>
        <end position="38"/>
    </location>
    <ligand>
        <name>ATP</name>
        <dbReference type="ChEBI" id="CHEBI:30616"/>
    </ligand>
</feature>
<reference key="1">
    <citation type="journal article" date="2002" name="Nat. Biotechnol.">
        <title>Genome sequence of the dissimilatory metal ion-reducing bacterium Shewanella oneidensis.</title>
        <authorList>
            <person name="Heidelberg J.F."/>
            <person name="Paulsen I.T."/>
            <person name="Nelson K.E."/>
            <person name="Gaidos E.J."/>
            <person name="Nelson W.C."/>
            <person name="Read T.D."/>
            <person name="Eisen J.A."/>
            <person name="Seshadri R."/>
            <person name="Ward N.L."/>
            <person name="Methe B.A."/>
            <person name="Clayton R.A."/>
            <person name="Meyer T."/>
            <person name="Tsapin A."/>
            <person name="Scott J."/>
            <person name="Beanan M.J."/>
            <person name="Brinkac L.M."/>
            <person name="Daugherty S.C."/>
            <person name="DeBoy R.T."/>
            <person name="Dodson R.J."/>
            <person name="Durkin A.S."/>
            <person name="Haft D.H."/>
            <person name="Kolonay J.F."/>
            <person name="Madupu R."/>
            <person name="Peterson J.D."/>
            <person name="Umayam L.A."/>
            <person name="White O."/>
            <person name="Wolf A.M."/>
            <person name="Vamathevan J.J."/>
            <person name="Weidman J.F."/>
            <person name="Impraim M."/>
            <person name="Lee K."/>
            <person name="Berry K.J."/>
            <person name="Lee C."/>
            <person name="Mueller J."/>
            <person name="Khouri H.M."/>
            <person name="Gill J."/>
            <person name="Utterback T.R."/>
            <person name="McDonald L.A."/>
            <person name="Feldblyum T.V."/>
            <person name="Smith H.O."/>
            <person name="Venter J.C."/>
            <person name="Nealson K.H."/>
            <person name="Fraser C.M."/>
        </authorList>
    </citation>
    <scope>NUCLEOTIDE SEQUENCE [LARGE SCALE GENOMIC DNA]</scope>
    <source>
        <strain>ATCC 700550 / JCM 31522 / CIP 106686 / LMG 19005 / NCIMB 14063 / MR-1</strain>
    </source>
</reference>
<organism>
    <name type="scientific">Shewanella oneidensis (strain ATCC 700550 / JCM 31522 / CIP 106686 / LMG 19005 / NCIMB 14063 / MR-1)</name>
    <dbReference type="NCBI Taxonomy" id="211586"/>
    <lineage>
        <taxon>Bacteria</taxon>
        <taxon>Pseudomonadati</taxon>
        <taxon>Pseudomonadota</taxon>
        <taxon>Gammaproteobacteria</taxon>
        <taxon>Alteromonadales</taxon>
        <taxon>Shewanellaceae</taxon>
        <taxon>Shewanella</taxon>
    </lineage>
</organism>
<sequence>MLTINIEKQLGQLQLKVNTQLPLRGVTAVFGRSGAGKTSLVNLLGGLTTPDKGEISLGDTLLFKHKTVNLPPEKRRIGYVFQEARLFPHYSVKGNLTYGMRHQSPALFDRIVQLLGLEKHLRSYPSTLSGGEKQRVAIGRALLTSPQMLLMDEPLASLDLPRKRELLPYLQTLAQELKLPIIYVSHSLDEILQLADHMLVLHQGHIIAQGPLTDVWNSEQMRPWVPLQELSSLICARIADRHPDYPMTRLVMDDGNQLWVSGQLPQTHKQVKVRIQANHVSVCTAEPKRSSIRNVLKGKIKELYPSDNDEQVQLKIALGNDELWANITLWACDELQLVAGKEIYAQIKGVTMTQMDIAQSH</sequence>
<proteinExistence type="inferred from homology"/>
<accession>Q8EAN3</accession>
<evidence type="ECO:0000255" key="1">
    <source>
        <dbReference type="HAMAP-Rule" id="MF_01705"/>
    </source>
</evidence>
<evidence type="ECO:0000255" key="2">
    <source>
        <dbReference type="PROSITE-ProRule" id="PRU01213"/>
    </source>
</evidence>
<protein>
    <recommendedName>
        <fullName evidence="1">Molybdenum import ATP-binding protein ModC</fullName>
        <ecNumber evidence="1">7.3.2.5</ecNumber>
    </recommendedName>
</protein>
<gene>
    <name evidence="1" type="primary">modC</name>
    <name type="ordered locus">SO_3865</name>
</gene>
<dbReference type="EC" id="7.3.2.5" evidence="1"/>
<dbReference type="EMBL" id="AE014299">
    <property type="protein sequence ID" value="AAN56841.1"/>
    <property type="molecule type" value="Genomic_DNA"/>
</dbReference>
<dbReference type="RefSeq" id="NP_719397.1">
    <property type="nucleotide sequence ID" value="NC_004347.2"/>
</dbReference>
<dbReference type="RefSeq" id="WP_011073623.1">
    <property type="nucleotide sequence ID" value="NC_004347.2"/>
</dbReference>
<dbReference type="SMR" id="Q8EAN3"/>
<dbReference type="STRING" id="211586.SO_3865"/>
<dbReference type="PaxDb" id="211586-SO_3865"/>
<dbReference type="KEGG" id="son:SO_3865"/>
<dbReference type="PATRIC" id="fig|211586.12.peg.3752"/>
<dbReference type="eggNOG" id="COG4148">
    <property type="taxonomic scope" value="Bacteria"/>
</dbReference>
<dbReference type="HOGENOM" id="CLU_000604_1_1_6"/>
<dbReference type="OrthoDB" id="9802264at2"/>
<dbReference type="PhylomeDB" id="Q8EAN3"/>
<dbReference type="BioCyc" id="SONE211586:G1GMP-3587-MONOMER"/>
<dbReference type="Proteomes" id="UP000008186">
    <property type="component" value="Chromosome"/>
</dbReference>
<dbReference type="GO" id="GO:0005886">
    <property type="term" value="C:plasma membrane"/>
    <property type="evidence" value="ECO:0007669"/>
    <property type="project" value="UniProtKB-SubCell"/>
</dbReference>
<dbReference type="GO" id="GO:0015412">
    <property type="term" value="F:ABC-type molybdate transporter activity"/>
    <property type="evidence" value="ECO:0007669"/>
    <property type="project" value="UniProtKB-EC"/>
</dbReference>
<dbReference type="GO" id="GO:0005524">
    <property type="term" value="F:ATP binding"/>
    <property type="evidence" value="ECO:0007669"/>
    <property type="project" value="UniProtKB-KW"/>
</dbReference>
<dbReference type="GO" id="GO:0016887">
    <property type="term" value="F:ATP hydrolysis activity"/>
    <property type="evidence" value="ECO:0007669"/>
    <property type="project" value="InterPro"/>
</dbReference>
<dbReference type="FunFam" id="2.40.50.100:FF:000037">
    <property type="entry name" value="Molybdenum import ATP-binding protein ModC"/>
    <property type="match status" value="1"/>
</dbReference>
<dbReference type="FunFam" id="3.40.50.300:FF:000634">
    <property type="entry name" value="Molybdenum import ATP-binding protein ModC"/>
    <property type="match status" value="1"/>
</dbReference>
<dbReference type="Gene3D" id="2.40.50.100">
    <property type="match status" value="1"/>
</dbReference>
<dbReference type="Gene3D" id="3.40.50.300">
    <property type="entry name" value="P-loop containing nucleotide triphosphate hydrolases"/>
    <property type="match status" value="1"/>
</dbReference>
<dbReference type="InterPro" id="IPR003593">
    <property type="entry name" value="AAA+_ATPase"/>
</dbReference>
<dbReference type="InterPro" id="IPR003439">
    <property type="entry name" value="ABC_transporter-like_ATP-bd"/>
</dbReference>
<dbReference type="InterPro" id="IPR017871">
    <property type="entry name" value="ABC_transporter-like_CS"/>
</dbReference>
<dbReference type="InterPro" id="IPR008995">
    <property type="entry name" value="Mo/tungstate-bd_C_term_dom"/>
</dbReference>
<dbReference type="InterPro" id="IPR011868">
    <property type="entry name" value="ModC_ABC_ATP-bd"/>
</dbReference>
<dbReference type="InterPro" id="IPR050334">
    <property type="entry name" value="Molybdenum_import_ModC"/>
</dbReference>
<dbReference type="InterPro" id="IPR004606">
    <property type="entry name" value="Mop_domain"/>
</dbReference>
<dbReference type="InterPro" id="IPR027417">
    <property type="entry name" value="P-loop_NTPase"/>
</dbReference>
<dbReference type="InterPro" id="IPR005116">
    <property type="entry name" value="Transp-assoc_OB_typ1"/>
</dbReference>
<dbReference type="NCBIfam" id="TIGR02142">
    <property type="entry name" value="modC_ABC"/>
    <property type="match status" value="1"/>
</dbReference>
<dbReference type="NCBIfam" id="TIGR00638">
    <property type="entry name" value="Mop"/>
    <property type="match status" value="1"/>
</dbReference>
<dbReference type="NCBIfam" id="NF008355">
    <property type="entry name" value="PRK11144.1"/>
    <property type="match status" value="1"/>
</dbReference>
<dbReference type="PANTHER" id="PTHR43514">
    <property type="entry name" value="ABC TRANSPORTER I FAMILY MEMBER 10"/>
    <property type="match status" value="1"/>
</dbReference>
<dbReference type="PANTHER" id="PTHR43514:SF4">
    <property type="entry name" value="ABC TRANSPORTER I FAMILY MEMBER 10"/>
    <property type="match status" value="1"/>
</dbReference>
<dbReference type="Pfam" id="PF00005">
    <property type="entry name" value="ABC_tran"/>
    <property type="match status" value="1"/>
</dbReference>
<dbReference type="Pfam" id="PF03459">
    <property type="entry name" value="TOBE"/>
    <property type="match status" value="1"/>
</dbReference>
<dbReference type="SMART" id="SM00382">
    <property type="entry name" value="AAA"/>
    <property type="match status" value="1"/>
</dbReference>
<dbReference type="SUPFAM" id="SSF50331">
    <property type="entry name" value="MOP-like"/>
    <property type="match status" value="1"/>
</dbReference>
<dbReference type="SUPFAM" id="SSF52540">
    <property type="entry name" value="P-loop containing nucleoside triphosphate hydrolases"/>
    <property type="match status" value="1"/>
</dbReference>
<dbReference type="PROSITE" id="PS00211">
    <property type="entry name" value="ABC_TRANSPORTER_1"/>
    <property type="match status" value="1"/>
</dbReference>
<dbReference type="PROSITE" id="PS50893">
    <property type="entry name" value="ABC_TRANSPORTER_2"/>
    <property type="match status" value="1"/>
</dbReference>
<dbReference type="PROSITE" id="PS51241">
    <property type="entry name" value="MODC"/>
    <property type="match status" value="1"/>
</dbReference>
<dbReference type="PROSITE" id="PS51866">
    <property type="entry name" value="MOP"/>
    <property type="match status" value="1"/>
</dbReference>
<keyword id="KW-0067">ATP-binding</keyword>
<keyword id="KW-0997">Cell inner membrane</keyword>
<keyword id="KW-1003">Cell membrane</keyword>
<keyword id="KW-0472">Membrane</keyword>
<keyword id="KW-0500">Molybdenum</keyword>
<keyword id="KW-0547">Nucleotide-binding</keyword>
<keyword id="KW-1185">Reference proteome</keyword>
<keyword id="KW-1278">Translocase</keyword>
<keyword id="KW-0813">Transport</keyword>